<evidence type="ECO:0000250" key="1"/>
<evidence type="ECO:0000250" key="2">
    <source>
        <dbReference type="UniProtKB" id="P00157"/>
    </source>
</evidence>
<evidence type="ECO:0000255" key="3">
    <source>
        <dbReference type="PROSITE-ProRule" id="PRU00967"/>
    </source>
</evidence>
<evidence type="ECO:0000255" key="4">
    <source>
        <dbReference type="PROSITE-ProRule" id="PRU00968"/>
    </source>
</evidence>
<name>CYB_TYPNA</name>
<accession>Q9MI97</accession>
<comment type="function">
    <text evidence="2">Component of the ubiquinol-cytochrome c reductase complex (complex III or cytochrome b-c1 complex) that is part of the mitochondrial respiratory chain. The b-c1 complex mediates electron transfer from ubiquinol to cytochrome c. Contributes to the generation of a proton gradient across the mitochondrial membrane that is then used for ATP synthesis.</text>
</comment>
<comment type="cofactor">
    <cofactor evidence="2">
        <name>heme b</name>
        <dbReference type="ChEBI" id="CHEBI:60344"/>
    </cofactor>
    <text evidence="2">Binds 2 heme b groups non-covalently.</text>
</comment>
<comment type="subunit">
    <text evidence="2">The cytochrome bc1 complex contains 3 respiratory subunits (MT-CYB, CYC1 and UQCRFS1), 2 core proteins (UQCRC1 and UQCRC2) and probably 6 low-molecular weight proteins.</text>
</comment>
<comment type="subcellular location">
    <subcellularLocation>
        <location evidence="2">Mitochondrion inner membrane</location>
        <topology evidence="2">Multi-pass membrane protein</topology>
    </subcellularLocation>
</comment>
<comment type="miscellaneous">
    <text evidence="1">Heme 1 (or BL or b562) is low-potential and absorbs at about 562 nm, and heme 2 (or BH or b566) is high-potential and absorbs at about 566 nm.</text>
</comment>
<comment type="similarity">
    <text evidence="3 4">Belongs to the cytochrome b family.</text>
</comment>
<comment type="caution">
    <text evidence="2">The full-length protein contains only eight transmembrane helices, not nine as predicted by bioinformatics tools.</text>
</comment>
<feature type="chain" id="PRO_0000061695" description="Cytochrome b">
    <location>
        <begin position="1"/>
        <end position="380"/>
    </location>
</feature>
<feature type="transmembrane region" description="Helical" evidence="2">
    <location>
        <begin position="34"/>
        <end position="54"/>
    </location>
</feature>
<feature type="transmembrane region" description="Helical" evidence="2">
    <location>
        <begin position="78"/>
        <end position="99"/>
    </location>
</feature>
<feature type="transmembrane region" description="Helical" evidence="2">
    <location>
        <begin position="114"/>
        <end position="134"/>
    </location>
</feature>
<feature type="transmembrane region" description="Helical" evidence="2">
    <location>
        <begin position="179"/>
        <end position="199"/>
    </location>
</feature>
<feature type="transmembrane region" description="Helical" evidence="2">
    <location>
        <begin position="227"/>
        <end position="247"/>
    </location>
</feature>
<feature type="transmembrane region" description="Helical" evidence="2">
    <location>
        <begin position="289"/>
        <end position="309"/>
    </location>
</feature>
<feature type="transmembrane region" description="Helical" evidence="2">
    <location>
        <begin position="321"/>
        <end position="341"/>
    </location>
</feature>
<feature type="transmembrane region" description="Helical" evidence="2">
    <location>
        <begin position="348"/>
        <end position="368"/>
    </location>
</feature>
<feature type="binding site" description="axial binding residue" evidence="2">
    <location>
        <position position="84"/>
    </location>
    <ligand>
        <name>heme b</name>
        <dbReference type="ChEBI" id="CHEBI:60344"/>
        <label>b562</label>
    </ligand>
    <ligandPart>
        <name>Fe</name>
        <dbReference type="ChEBI" id="CHEBI:18248"/>
    </ligandPart>
</feature>
<feature type="binding site" description="axial binding residue" evidence="2">
    <location>
        <position position="98"/>
    </location>
    <ligand>
        <name>heme b</name>
        <dbReference type="ChEBI" id="CHEBI:60344"/>
        <label>b566</label>
    </ligand>
    <ligandPart>
        <name>Fe</name>
        <dbReference type="ChEBI" id="CHEBI:18248"/>
    </ligandPart>
</feature>
<feature type="binding site" description="axial binding residue" evidence="2">
    <location>
        <position position="183"/>
    </location>
    <ligand>
        <name>heme b</name>
        <dbReference type="ChEBI" id="CHEBI:60344"/>
        <label>b562</label>
    </ligand>
    <ligandPart>
        <name>Fe</name>
        <dbReference type="ChEBI" id="CHEBI:18248"/>
    </ligandPart>
</feature>
<feature type="binding site" description="axial binding residue" evidence="2">
    <location>
        <position position="197"/>
    </location>
    <ligand>
        <name>heme b</name>
        <dbReference type="ChEBI" id="CHEBI:60344"/>
        <label>b566</label>
    </ligand>
    <ligandPart>
        <name>Fe</name>
        <dbReference type="ChEBI" id="CHEBI:18248"/>
    </ligandPart>
</feature>
<feature type="binding site" evidence="2">
    <location>
        <position position="202"/>
    </location>
    <ligand>
        <name>a ubiquinone</name>
        <dbReference type="ChEBI" id="CHEBI:16389"/>
    </ligand>
</feature>
<keyword id="KW-0249">Electron transport</keyword>
<keyword id="KW-0349">Heme</keyword>
<keyword id="KW-0408">Iron</keyword>
<keyword id="KW-0472">Membrane</keyword>
<keyword id="KW-0479">Metal-binding</keyword>
<keyword id="KW-0496">Mitochondrion</keyword>
<keyword id="KW-0999">Mitochondrion inner membrane</keyword>
<keyword id="KW-0679">Respiratory chain</keyword>
<keyword id="KW-0812">Transmembrane</keyword>
<keyword id="KW-1133">Transmembrane helix</keyword>
<keyword id="KW-0813">Transport</keyword>
<keyword id="KW-0830">Ubiquinone</keyword>
<organism>
    <name type="scientific">Typhlonectes natans</name>
    <name type="common">Rubber eel</name>
    <dbReference type="NCBI Taxonomy" id="8456"/>
    <lineage>
        <taxon>Eukaryota</taxon>
        <taxon>Metazoa</taxon>
        <taxon>Chordata</taxon>
        <taxon>Craniata</taxon>
        <taxon>Vertebrata</taxon>
        <taxon>Euteleostomi</taxon>
        <taxon>Amphibia</taxon>
        <taxon>Gymnophiona</taxon>
        <taxon>Typhlonectidae</taxon>
        <taxon>Typhlonectes</taxon>
    </lineage>
</organism>
<gene>
    <name type="primary">mt-cyb</name>
    <name type="synonym">cob</name>
    <name type="synonym">cytb</name>
    <name type="synonym">mtcyb</name>
</gene>
<sequence length="380" mass="42803">MAPTMRKTHPLLKIINNSLIDLPTPSNISYLWNYGSLLGLCLMTQILTGLFLAMHYTADTATAFSSLAHICRDVNYGWLMRNIHANGASFFFICIYLHIGRGIYYGSYLFKETWNIGVILLLLVMATAFVGYVLPWGQMSFWGATVITNILSAIPYIGNNLVQWVWGGFAVDNATLTRFFTFHFLLPFLIAGTSMLHLLFLHETGSNNPTGLNSNSDKIPFHPYFSYKDTFGFMIMLAALALLSTTNPNLMSDPENFTPANPLVTPPHIKPEWYFLFAYAILRSIPNKLGGVLALLFSIMILMLIPSLHTAKQRSMMFRPLSQLMFWSIIANTLVLTWIGGQPVEDPFILIGQISSALYFILFLVLLPLTNWSDNKMLNL</sequence>
<reference key="1">
    <citation type="journal article" date="2000" name="Genetics">
        <title>Mitochondrial evidence on the phylogenetic position of caecilians (Amphibia: Gymnophiona).</title>
        <authorList>
            <person name="Zardoya R."/>
            <person name="Meyer A."/>
        </authorList>
    </citation>
    <scope>NUCLEOTIDE SEQUENCE [GENOMIC DNA]</scope>
</reference>
<proteinExistence type="inferred from homology"/>
<geneLocation type="mitochondrion"/>
<protein>
    <recommendedName>
        <fullName>Cytochrome b</fullName>
    </recommendedName>
    <alternativeName>
        <fullName>Complex III subunit 3</fullName>
    </alternativeName>
    <alternativeName>
        <fullName>Complex III subunit III</fullName>
    </alternativeName>
    <alternativeName>
        <fullName>Cytochrome b-c1 complex subunit 3</fullName>
    </alternativeName>
    <alternativeName>
        <fullName>Ubiquinol-cytochrome-c reductase complex cytochrome b subunit</fullName>
    </alternativeName>
</protein>
<dbReference type="EMBL" id="AF154051">
    <property type="protein sequence ID" value="AAF78158.1"/>
    <property type="molecule type" value="Genomic_DNA"/>
</dbReference>
<dbReference type="RefSeq" id="NP_059962.1">
    <property type="nucleotide sequence ID" value="NC_002471.1"/>
</dbReference>
<dbReference type="SMR" id="Q9MI97"/>
<dbReference type="GeneID" id="809298"/>
<dbReference type="CTD" id="4519"/>
<dbReference type="GO" id="GO:0005743">
    <property type="term" value="C:mitochondrial inner membrane"/>
    <property type="evidence" value="ECO:0007669"/>
    <property type="project" value="UniProtKB-SubCell"/>
</dbReference>
<dbReference type="GO" id="GO:0045275">
    <property type="term" value="C:respiratory chain complex III"/>
    <property type="evidence" value="ECO:0007669"/>
    <property type="project" value="InterPro"/>
</dbReference>
<dbReference type="GO" id="GO:0046872">
    <property type="term" value="F:metal ion binding"/>
    <property type="evidence" value="ECO:0007669"/>
    <property type="project" value="UniProtKB-KW"/>
</dbReference>
<dbReference type="GO" id="GO:0008121">
    <property type="term" value="F:ubiquinol-cytochrome-c reductase activity"/>
    <property type="evidence" value="ECO:0007669"/>
    <property type="project" value="InterPro"/>
</dbReference>
<dbReference type="GO" id="GO:0006122">
    <property type="term" value="P:mitochondrial electron transport, ubiquinol to cytochrome c"/>
    <property type="evidence" value="ECO:0007669"/>
    <property type="project" value="TreeGrafter"/>
</dbReference>
<dbReference type="CDD" id="cd00290">
    <property type="entry name" value="cytochrome_b_C"/>
    <property type="match status" value="1"/>
</dbReference>
<dbReference type="CDD" id="cd00284">
    <property type="entry name" value="Cytochrome_b_N"/>
    <property type="match status" value="1"/>
</dbReference>
<dbReference type="FunFam" id="1.20.810.10:FF:000002">
    <property type="entry name" value="Cytochrome b"/>
    <property type="match status" value="1"/>
</dbReference>
<dbReference type="Gene3D" id="1.20.810.10">
    <property type="entry name" value="Cytochrome Bc1 Complex, Chain C"/>
    <property type="match status" value="1"/>
</dbReference>
<dbReference type="InterPro" id="IPR005798">
    <property type="entry name" value="Cyt_b/b6_C"/>
</dbReference>
<dbReference type="InterPro" id="IPR036150">
    <property type="entry name" value="Cyt_b/b6_C_sf"/>
</dbReference>
<dbReference type="InterPro" id="IPR005797">
    <property type="entry name" value="Cyt_b/b6_N"/>
</dbReference>
<dbReference type="InterPro" id="IPR027387">
    <property type="entry name" value="Cytb/b6-like_sf"/>
</dbReference>
<dbReference type="InterPro" id="IPR030689">
    <property type="entry name" value="Cytochrome_b"/>
</dbReference>
<dbReference type="InterPro" id="IPR048260">
    <property type="entry name" value="Cytochrome_b_C_euk/bac"/>
</dbReference>
<dbReference type="InterPro" id="IPR048259">
    <property type="entry name" value="Cytochrome_b_N_euk/bac"/>
</dbReference>
<dbReference type="InterPro" id="IPR016174">
    <property type="entry name" value="Di-haem_cyt_TM"/>
</dbReference>
<dbReference type="PANTHER" id="PTHR19271">
    <property type="entry name" value="CYTOCHROME B"/>
    <property type="match status" value="1"/>
</dbReference>
<dbReference type="PANTHER" id="PTHR19271:SF16">
    <property type="entry name" value="CYTOCHROME B"/>
    <property type="match status" value="1"/>
</dbReference>
<dbReference type="Pfam" id="PF00032">
    <property type="entry name" value="Cytochrom_B_C"/>
    <property type="match status" value="1"/>
</dbReference>
<dbReference type="Pfam" id="PF00033">
    <property type="entry name" value="Cytochrome_B"/>
    <property type="match status" value="1"/>
</dbReference>
<dbReference type="PIRSF" id="PIRSF038885">
    <property type="entry name" value="COB"/>
    <property type="match status" value="1"/>
</dbReference>
<dbReference type="SUPFAM" id="SSF81648">
    <property type="entry name" value="a domain/subunit of cytochrome bc1 complex (Ubiquinol-cytochrome c reductase)"/>
    <property type="match status" value="1"/>
</dbReference>
<dbReference type="SUPFAM" id="SSF81342">
    <property type="entry name" value="Transmembrane di-heme cytochromes"/>
    <property type="match status" value="1"/>
</dbReference>
<dbReference type="PROSITE" id="PS51003">
    <property type="entry name" value="CYTB_CTER"/>
    <property type="match status" value="1"/>
</dbReference>
<dbReference type="PROSITE" id="PS51002">
    <property type="entry name" value="CYTB_NTER"/>
    <property type="match status" value="1"/>
</dbReference>